<feature type="chain" id="PRO_0000140515" description="Delta-aminolevulinic acid dehydratase">
    <location>
        <begin position="1"/>
        <end position="324"/>
    </location>
</feature>
<feature type="active site" description="Schiff-base intermediate with substrate" evidence="1">
    <location>
        <position position="195"/>
    </location>
</feature>
<feature type="active site" description="Schiff-base intermediate with substrate" evidence="1">
    <location>
        <position position="248"/>
    </location>
</feature>
<feature type="binding site" evidence="1">
    <location>
        <position position="118"/>
    </location>
    <ligand>
        <name>Zn(2+)</name>
        <dbReference type="ChEBI" id="CHEBI:29105"/>
        <note>catalytic</note>
    </ligand>
</feature>
<feature type="binding site" evidence="1">
    <location>
        <position position="120"/>
    </location>
    <ligand>
        <name>Zn(2+)</name>
        <dbReference type="ChEBI" id="CHEBI:29105"/>
        <note>catalytic</note>
    </ligand>
</feature>
<feature type="binding site" evidence="1">
    <location>
        <position position="128"/>
    </location>
    <ligand>
        <name>Zn(2+)</name>
        <dbReference type="ChEBI" id="CHEBI:29105"/>
        <note>catalytic</note>
    </ligand>
</feature>
<feature type="binding site" evidence="1">
    <location>
        <position position="205"/>
    </location>
    <ligand>
        <name>5-aminolevulinate</name>
        <dbReference type="ChEBI" id="CHEBI:356416"/>
        <label>1</label>
    </ligand>
</feature>
<feature type="binding site" evidence="1">
    <location>
        <position position="217"/>
    </location>
    <ligand>
        <name>5-aminolevulinate</name>
        <dbReference type="ChEBI" id="CHEBI:356416"/>
        <label>1</label>
    </ligand>
</feature>
<feature type="binding site" evidence="1">
    <location>
        <position position="233"/>
    </location>
    <ligand>
        <name>Mg(2+)</name>
        <dbReference type="ChEBI" id="CHEBI:18420"/>
    </ligand>
</feature>
<feature type="binding site" evidence="1">
    <location>
        <position position="274"/>
    </location>
    <ligand>
        <name>5-aminolevulinate</name>
        <dbReference type="ChEBI" id="CHEBI:356416"/>
        <label>2</label>
    </ligand>
</feature>
<feature type="binding site" evidence="1">
    <location>
        <position position="313"/>
    </location>
    <ligand>
        <name>5-aminolevulinate</name>
        <dbReference type="ChEBI" id="CHEBI:356416"/>
        <label>2</label>
    </ligand>
</feature>
<dbReference type="EC" id="4.2.1.24"/>
<dbReference type="EMBL" id="BA000033">
    <property type="protein sequence ID" value="BAB95477.1"/>
    <property type="molecule type" value="Genomic_DNA"/>
</dbReference>
<dbReference type="RefSeq" id="WP_000667126.1">
    <property type="nucleotide sequence ID" value="NC_003923.1"/>
</dbReference>
<dbReference type="SMR" id="P64335"/>
<dbReference type="KEGG" id="sam:MW1612"/>
<dbReference type="HOGENOM" id="CLU_035731_0_0_9"/>
<dbReference type="UniPathway" id="UPA00251">
    <property type="reaction ID" value="UER00318"/>
</dbReference>
<dbReference type="GO" id="GO:0005829">
    <property type="term" value="C:cytosol"/>
    <property type="evidence" value="ECO:0007669"/>
    <property type="project" value="TreeGrafter"/>
</dbReference>
<dbReference type="GO" id="GO:0004655">
    <property type="term" value="F:porphobilinogen synthase activity"/>
    <property type="evidence" value="ECO:0007669"/>
    <property type="project" value="UniProtKB-EC"/>
</dbReference>
<dbReference type="GO" id="GO:0008270">
    <property type="term" value="F:zinc ion binding"/>
    <property type="evidence" value="ECO:0007669"/>
    <property type="project" value="TreeGrafter"/>
</dbReference>
<dbReference type="GO" id="GO:0006782">
    <property type="term" value="P:protoporphyrinogen IX biosynthetic process"/>
    <property type="evidence" value="ECO:0007669"/>
    <property type="project" value="UniProtKB-UniPathway"/>
</dbReference>
<dbReference type="CDD" id="cd00384">
    <property type="entry name" value="ALAD_PBGS"/>
    <property type="match status" value="1"/>
</dbReference>
<dbReference type="FunFam" id="3.20.20.70:FF:000019">
    <property type="entry name" value="Delta-aminolevulinic acid dehydratase"/>
    <property type="match status" value="1"/>
</dbReference>
<dbReference type="Gene3D" id="3.20.20.70">
    <property type="entry name" value="Aldolase class I"/>
    <property type="match status" value="1"/>
</dbReference>
<dbReference type="InterPro" id="IPR001731">
    <property type="entry name" value="ALAD"/>
</dbReference>
<dbReference type="InterPro" id="IPR030656">
    <property type="entry name" value="ALAD_AS"/>
</dbReference>
<dbReference type="InterPro" id="IPR013785">
    <property type="entry name" value="Aldolase_TIM"/>
</dbReference>
<dbReference type="NCBIfam" id="NF006762">
    <property type="entry name" value="PRK09283.1"/>
    <property type="match status" value="1"/>
</dbReference>
<dbReference type="PANTHER" id="PTHR11458">
    <property type="entry name" value="DELTA-AMINOLEVULINIC ACID DEHYDRATASE"/>
    <property type="match status" value="1"/>
</dbReference>
<dbReference type="PANTHER" id="PTHR11458:SF0">
    <property type="entry name" value="DELTA-AMINOLEVULINIC ACID DEHYDRATASE"/>
    <property type="match status" value="1"/>
</dbReference>
<dbReference type="Pfam" id="PF00490">
    <property type="entry name" value="ALAD"/>
    <property type="match status" value="1"/>
</dbReference>
<dbReference type="PIRSF" id="PIRSF001415">
    <property type="entry name" value="Porphbilin_synth"/>
    <property type="match status" value="1"/>
</dbReference>
<dbReference type="PRINTS" id="PR00144">
    <property type="entry name" value="DALDHYDRTASE"/>
</dbReference>
<dbReference type="SMART" id="SM01004">
    <property type="entry name" value="ALAD"/>
    <property type="match status" value="1"/>
</dbReference>
<dbReference type="SUPFAM" id="SSF51569">
    <property type="entry name" value="Aldolase"/>
    <property type="match status" value="1"/>
</dbReference>
<dbReference type="PROSITE" id="PS00169">
    <property type="entry name" value="D_ALA_DEHYDRATASE"/>
    <property type="match status" value="1"/>
</dbReference>
<organism>
    <name type="scientific">Staphylococcus aureus (strain MW2)</name>
    <dbReference type="NCBI Taxonomy" id="196620"/>
    <lineage>
        <taxon>Bacteria</taxon>
        <taxon>Bacillati</taxon>
        <taxon>Bacillota</taxon>
        <taxon>Bacilli</taxon>
        <taxon>Bacillales</taxon>
        <taxon>Staphylococcaceae</taxon>
        <taxon>Staphylococcus</taxon>
    </lineage>
</organism>
<name>HEM2_STAAW</name>
<protein>
    <recommendedName>
        <fullName>Delta-aminolevulinic acid dehydratase</fullName>
        <shortName>ALAD</shortName>
        <shortName>ALADH</shortName>
        <ecNumber>4.2.1.24</ecNumber>
    </recommendedName>
    <alternativeName>
        <fullName>Porphobilinogen synthase</fullName>
    </alternativeName>
</protein>
<reference key="1">
    <citation type="journal article" date="2002" name="Lancet">
        <title>Genome and virulence determinants of high virulence community-acquired MRSA.</title>
        <authorList>
            <person name="Baba T."/>
            <person name="Takeuchi F."/>
            <person name="Kuroda M."/>
            <person name="Yuzawa H."/>
            <person name="Aoki K."/>
            <person name="Oguchi A."/>
            <person name="Nagai Y."/>
            <person name="Iwama N."/>
            <person name="Asano K."/>
            <person name="Naimi T."/>
            <person name="Kuroda H."/>
            <person name="Cui L."/>
            <person name="Yamamoto K."/>
            <person name="Hiramatsu K."/>
        </authorList>
    </citation>
    <scope>NUCLEOTIDE SEQUENCE [LARGE SCALE GENOMIC DNA]</scope>
    <source>
        <strain>MW2</strain>
    </source>
</reference>
<keyword id="KW-0350">Heme biosynthesis</keyword>
<keyword id="KW-0456">Lyase</keyword>
<keyword id="KW-0460">Magnesium</keyword>
<keyword id="KW-0479">Metal-binding</keyword>
<keyword id="KW-0627">Porphyrin biosynthesis</keyword>
<keyword id="KW-0862">Zinc</keyword>
<comment type="function">
    <text evidence="1">Catalyzes an early step in the biosynthesis of tetrapyrroles. Binds two molecules of 5-aminolevulinate per subunit, each at a distinct site, and catalyzes their condensation to form porphobilinogen (By similarity).</text>
</comment>
<comment type="catalytic activity">
    <reaction>
        <text>2 5-aminolevulinate = porphobilinogen + 2 H2O + H(+)</text>
        <dbReference type="Rhea" id="RHEA:24064"/>
        <dbReference type="ChEBI" id="CHEBI:15377"/>
        <dbReference type="ChEBI" id="CHEBI:15378"/>
        <dbReference type="ChEBI" id="CHEBI:58126"/>
        <dbReference type="ChEBI" id="CHEBI:356416"/>
        <dbReference type="EC" id="4.2.1.24"/>
    </reaction>
</comment>
<comment type="cofactor">
    <cofactor evidence="1">
        <name>Zn(2+)</name>
        <dbReference type="ChEBI" id="CHEBI:29105"/>
    </cofactor>
    <text evidence="1">Binds 1 zinc ion per monomer.</text>
</comment>
<comment type="pathway">
    <text>Porphyrin-containing compound metabolism; protoporphyrin-IX biosynthesis; coproporphyrinogen-III from 5-aminolevulinate: step 1/4.</text>
</comment>
<comment type="subunit">
    <text evidence="1">Homooctamer.</text>
</comment>
<comment type="similarity">
    <text evidence="2">Belongs to the ALAD family.</text>
</comment>
<gene>
    <name type="primary">hemB</name>
    <name type="ordered locus">MW1612</name>
</gene>
<proteinExistence type="inferred from homology"/>
<sequence>MKFDRHRRLRSSATMRDMVRENHVRKEDLIYPIFVVEKDDVKKEIKSLPGVYQISLNLLESELKEAYDLGIRAIMFFGVPNSKDDIGTGAYIHDGVIQQATRIAKKMYDDLLIVADTCLCEYTDHGHCGVIDDHTHDVDNDKSLPLLVKTAISQVEAGADIIAPSNMMDGFVAEIRRGLDEAGYYNIPIMSYGVKYASSFFGPFRDAADSAPSFGDRKTYQMDPANRLEALRELESDLKEGCDMMIVKPALSYLDIVRDVKNHTNVPVVAYNVSGEYSMTKAAAQNGWIDEERVVMEQMVSMKRAGADMIITYFAKDICRYLDK</sequence>
<evidence type="ECO:0000250" key="1"/>
<evidence type="ECO:0000305" key="2"/>
<accession>P64335</accession>
<accession>Q99TJ3</accession>